<comment type="function">
    <text evidence="1">RuBisCO catalyzes two reactions: the carboxylation of D-ribulose 1,5-bisphosphate, the primary event in carbon dioxide fixation, as well as the oxidative fragmentation of the pentose substrate in the photorespiration process. Both reactions occur simultaneously and in competition at the same active site.</text>
</comment>
<comment type="catalytic activity">
    <reaction evidence="1">
        <text>2 (2R)-3-phosphoglycerate + 2 H(+) = D-ribulose 1,5-bisphosphate + CO2 + H2O</text>
        <dbReference type="Rhea" id="RHEA:23124"/>
        <dbReference type="ChEBI" id="CHEBI:15377"/>
        <dbReference type="ChEBI" id="CHEBI:15378"/>
        <dbReference type="ChEBI" id="CHEBI:16526"/>
        <dbReference type="ChEBI" id="CHEBI:57870"/>
        <dbReference type="ChEBI" id="CHEBI:58272"/>
        <dbReference type="EC" id="4.1.1.39"/>
    </reaction>
</comment>
<comment type="catalytic activity">
    <reaction evidence="1">
        <text>D-ribulose 1,5-bisphosphate + O2 = 2-phosphoglycolate + (2R)-3-phosphoglycerate + 2 H(+)</text>
        <dbReference type="Rhea" id="RHEA:36631"/>
        <dbReference type="ChEBI" id="CHEBI:15378"/>
        <dbReference type="ChEBI" id="CHEBI:15379"/>
        <dbReference type="ChEBI" id="CHEBI:57870"/>
        <dbReference type="ChEBI" id="CHEBI:58033"/>
        <dbReference type="ChEBI" id="CHEBI:58272"/>
    </reaction>
</comment>
<comment type="cofactor">
    <cofactor evidence="1">
        <name>Mg(2+)</name>
        <dbReference type="ChEBI" id="CHEBI:18420"/>
    </cofactor>
    <text evidence="1">Binds 1 Mg(2+) ion per subunit.</text>
</comment>
<comment type="subunit">
    <text evidence="1">Heterohexadecamer of 8 large chains and 8 small chains; disulfide-linked. The disulfide link is formed within the large subunit homodimers.</text>
</comment>
<comment type="subcellular location">
    <subcellularLocation>
        <location>Plastid</location>
        <location>Chloroplast</location>
    </subcellularLocation>
</comment>
<comment type="PTM">
    <text evidence="1">The disulfide bond which can form in the large chain dimeric partners within the hexadecamer appears to be associated with oxidative stress and protein turnover.</text>
</comment>
<comment type="miscellaneous">
    <text evidence="1">The basic functional RuBisCO is composed of a large chain homodimer in a 'head-to-tail' conformation. In form I RuBisCO this homodimer is arranged in a barrel-like tetramer with the small subunits forming a tetrameric 'cap' on each end of the 'barrel'.</text>
</comment>
<comment type="similarity">
    <text evidence="1">Belongs to the RuBisCO large chain family. Type I subfamily.</text>
</comment>
<feature type="chain" id="PRO_0000062354" description="Ribulose bisphosphate carboxylase large chain">
    <location>
        <begin position="1" status="less than"/>
        <end position="443"/>
    </location>
</feature>
<feature type="active site" description="Proton acceptor" evidence="1">
    <location>
        <position position="141"/>
    </location>
</feature>
<feature type="active site" description="Proton acceptor" evidence="1">
    <location>
        <position position="260"/>
    </location>
</feature>
<feature type="binding site" description="in homodimeric partner" evidence="1">
    <location>
        <position position="89"/>
    </location>
    <ligand>
        <name>substrate</name>
    </ligand>
</feature>
<feature type="binding site" evidence="1">
    <location>
        <position position="139"/>
    </location>
    <ligand>
        <name>substrate</name>
    </ligand>
</feature>
<feature type="binding site" evidence="1">
    <location>
        <position position="143"/>
    </location>
    <ligand>
        <name>substrate</name>
    </ligand>
</feature>
<feature type="binding site" description="via carbamate group" evidence="1">
    <location>
        <position position="167"/>
    </location>
    <ligand>
        <name>Mg(2+)</name>
        <dbReference type="ChEBI" id="CHEBI:18420"/>
    </ligand>
</feature>
<feature type="binding site" evidence="1">
    <location>
        <position position="169"/>
    </location>
    <ligand>
        <name>Mg(2+)</name>
        <dbReference type="ChEBI" id="CHEBI:18420"/>
    </ligand>
</feature>
<feature type="binding site" evidence="1">
    <location>
        <position position="170"/>
    </location>
    <ligand>
        <name>Mg(2+)</name>
        <dbReference type="ChEBI" id="CHEBI:18420"/>
    </ligand>
</feature>
<feature type="binding site" evidence="1">
    <location>
        <position position="261"/>
    </location>
    <ligand>
        <name>substrate</name>
    </ligand>
</feature>
<feature type="binding site" evidence="1">
    <location>
        <position position="293"/>
    </location>
    <ligand>
        <name>substrate</name>
    </ligand>
</feature>
<feature type="binding site" evidence="1">
    <location>
        <position position="345"/>
    </location>
    <ligand>
        <name>substrate</name>
    </ligand>
</feature>
<feature type="site" description="Transition state stabilizer" evidence="1">
    <location>
        <position position="300"/>
    </location>
</feature>
<feature type="modified residue" description="N6-carboxylysine" evidence="1">
    <location>
        <position position="167"/>
    </location>
</feature>
<feature type="disulfide bond" description="Interchain; in linked form" evidence="1">
    <location>
        <position position="213"/>
    </location>
</feature>
<feature type="non-terminal residue">
    <location>
        <position position="1"/>
    </location>
</feature>
<evidence type="ECO:0000255" key="1">
    <source>
        <dbReference type="HAMAP-Rule" id="MF_01338"/>
    </source>
</evidence>
<proteinExistence type="inferred from homology"/>
<name>RBL_ANTMA</name>
<keyword id="KW-0113">Calvin cycle</keyword>
<keyword id="KW-0120">Carbon dioxide fixation</keyword>
<keyword id="KW-0150">Chloroplast</keyword>
<keyword id="KW-1015">Disulfide bond</keyword>
<keyword id="KW-0456">Lyase</keyword>
<keyword id="KW-0460">Magnesium</keyword>
<keyword id="KW-0479">Metal-binding</keyword>
<keyword id="KW-0503">Monooxygenase</keyword>
<keyword id="KW-0560">Oxidoreductase</keyword>
<keyword id="KW-0601">Photorespiration</keyword>
<keyword id="KW-0602">Photosynthesis</keyword>
<keyword id="KW-0934">Plastid</keyword>
<geneLocation type="chloroplast"/>
<accession>Q05554</accession>
<gene>
    <name evidence="1" type="primary">rbcL</name>
</gene>
<dbReference type="EC" id="4.1.1.39" evidence="1"/>
<dbReference type="EMBL" id="L11688">
    <property type="protein sequence ID" value="AAA84017.1"/>
    <property type="molecule type" value="Genomic_DNA"/>
</dbReference>
<dbReference type="GO" id="GO:0009507">
    <property type="term" value="C:chloroplast"/>
    <property type="evidence" value="ECO:0007669"/>
    <property type="project" value="UniProtKB-SubCell"/>
</dbReference>
<dbReference type="GO" id="GO:0000287">
    <property type="term" value="F:magnesium ion binding"/>
    <property type="evidence" value="ECO:0007669"/>
    <property type="project" value="InterPro"/>
</dbReference>
<dbReference type="GO" id="GO:0004497">
    <property type="term" value="F:monooxygenase activity"/>
    <property type="evidence" value="ECO:0007669"/>
    <property type="project" value="UniProtKB-KW"/>
</dbReference>
<dbReference type="GO" id="GO:0016984">
    <property type="term" value="F:ribulose-bisphosphate carboxylase activity"/>
    <property type="evidence" value="ECO:0007669"/>
    <property type="project" value="UniProtKB-EC"/>
</dbReference>
<dbReference type="GO" id="GO:0009853">
    <property type="term" value="P:photorespiration"/>
    <property type="evidence" value="ECO:0007669"/>
    <property type="project" value="UniProtKB-KW"/>
</dbReference>
<dbReference type="GO" id="GO:0019253">
    <property type="term" value="P:reductive pentose-phosphate cycle"/>
    <property type="evidence" value="ECO:0007669"/>
    <property type="project" value="UniProtKB-KW"/>
</dbReference>
<dbReference type="CDD" id="cd08212">
    <property type="entry name" value="RuBisCO_large_I"/>
    <property type="match status" value="1"/>
</dbReference>
<dbReference type="FunFam" id="3.20.20.110:FF:000001">
    <property type="entry name" value="Ribulose bisphosphate carboxylase large chain"/>
    <property type="match status" value="1"/>
</dbReference>
<dbReference type="Gene3D" id="3.20.20.110">
    <property type="entry name" value="Ribulose bisphosphate carboxylase, large subunit, C-terminal domain"/>
    <property type="match status" value="1"/>
</dbReference>
<dbReference type="Gene3D" id="3.30.70.150">
    <property type="entry name" value="RuBisCO large subunit, N-terminal domain"/>
    <property type="match status" value="1"/>
</dbReference>
<dbReference type="HAMAP" id="MF_01338">
    <property type="entry name" value="RuBisCO_L_type1"/>
    <property type="match status" value="1"/>
</dbReference>
<dbReference type="InterPro" id="IPR033966">
    <property type="entry name" value="RuBisCO"/>
</dbReference>
<dbReference type="InterPro" id="IPR020878">
    <property type="entry name" value="RuBisCo_large_chain_AS"/>
</dbReference>
<dbReference type="InterPro" id="IPR000685">
    <property type="entry name" value="RuBisCO_lsu_C"/>
</dbReference>
<dbReference type="InterPro" id="IPR036376">
    <property type="entry name" value="RuBisCO_lsu_C_sf"/>
</dbReference>
<dbReference type="InterPro" id="IPR017443">
    <property type="entry name" value="RuBisCO_lsu_fd_N"/>
</dbReference>
<dbReference type="InterPro" id="IPR036422">
    <property type="entry name" value="RuBisCO_lsu_N_sf"/>
</dbReference>
<dbReference type="InterPro" id="IPR020888">
    <property type="entry name" value="RuBisCO_lsuI"/>
</dbReference>
<dbReference type="NCBIfam" id="NF003252">
    <property type="entry name" value="PRK04208.1"/>
    <property type="match status" value="1"/>
</dbReference>
<dbReference type="PANTHER" id="PTHR42704">
    <property type="entry name" value="RIBULOSE BISPHOSPHATE CARBOXYLASE"/>
    <property type="match status" value="1"/>
</dbReference>
<dbReference type="PANTHER" id="PTHR42704:SF15">
    <property type="entry name" value="RIBULOSE BISPHOSPHATE CARBOXYLASE LARGE CHAIN"/>
    <property type="match status" value="1"/>
</dbReference>
<dbReference type="Pfam" id="PF00016">
    <property type="entry name" value="RuBisCO_large"/>
    <property type="match status" value="1"/>
</dbReference>
<dbReference type="Pfam" id="PF02788">
    <property type="entry name" value="RuBisCO_large_N"/>
    <property type="match status" value="1"/>
</dbReference>
<dbReference type="SFLD" id="SFLDG01052">
    <property type="entry name" value="RuBisCO"/>
    <property type="match status" value="1"/>
</dbReference>
<dbReference type="SFLD" id="SFLDS00014">
    <property type="entry name" value="RuBisCO"/>
    <property type="match status" value="1"/>
</dbReference>
<dbReference type="SFLD" id="SFLDG00301">
    <property type="entry name" value="RuBisCO-like_proteins"/>
    <property type="match status" value="1"/>
</dbReference>
<dbReference type="SUPFAM" id="SSF51649">
    <property type="entry name" value="RuBisCo, C-terminal domain"/>
    <property type="match status" value="1"/>
</dbReference>
<dbReference type="SUPFAM" id="SSF54966">
    <property type="entry name" value="RuBisCO, large subunit, small (N-terminal) domain"/>
    <property type="match status" value="1"/>
</dbReference>
<dbReference type="PROSITE" id="PS00157">
    <property type="entry name" value="RUBISCO_LARGE"/>
    <property type="match status" value="1"/>
</dbReference>
<reference key="1">
    <citation type="journal article" date="1992" name="Ann. Mo. Bot. Gard.">
        <title>Monophyly of the Asteridae and identification of their major lineages inferred from DNA sequences of rbcL.</title>
        <authorList>
            <person name="Olmstead R.G."/>
            <person name="Michaels H.J."/>
            <person name="Scott K.M."/>
            <person name="Palmer J.D."/>
        </authorList>
        <dbReference type="AGRICOLA" id="IND93014998"/>
    </citation>
    <scope>NUCLEOTIDE SEQUENCE [GENOMIC DNA]</scope>
</reference>
<protein>
    <recommendedName>
        <fullName evidence="1">Ribulose bisphosphate carboxylase large chain</fullName>
        <shortName evidence="1">RuBisCO large subunit</shortName>
        <ecNumber evidence="1">4.1.1.39</ecNumber>
    </recommendedName>
</protein>
<organism>
    <name type="scientific">Antirrhinum majus</name>
    <name type="common">Garden snapdragon</name>
    <dbReference type="NCBI Taxonomy" id="4151"/>
    <lineage>
        <taxon>Eukaryota</taxon>
        <taxon>Viridiplantae</taxon>
        <taxon>Streptophyta</taxon>
        <taxon>Embryophyta</taxon>
        <taxon>Tracheophyta</taxon>
        <taxon>Spermatophyta</taxon>
        <taxon>Magnoliopsida</taxon>
        <taxon>eudicotyledons</taxon>
        <taxon>Gunneridae</taxon>
        <taxon>Pentapetalae</taxon>
        <taxon>asterids</taxon>
        <taxon>lamiids</taxon>
        <taxon>Lamiales</taxon>
        <taxon>Plantaginaceae</taxon>
        <taxon>Antirrhineae</taxon>
        <taxon>Antirrhinum</taxon>
    </lineage>
</organism>
<sequence>DILAAFRVTPQPGVPPEEAGAAVXAESSTGTWTTVWTDGLTSLDRYKGRCYHIEPVPGEADQYICYVAYPLDLFEEGSVTNMFTSIVGNVFGFKALRALRLEDLRIPXAYVKTFQGPPHGIQVERDKLNKYGRPLLGCTIKPKLGLSAKNYGRACYECLRGGLDFTKDDENVNSQPFMRWRDRFLFCAEAIYKSQAETGEIKGHYLNATAGTCEEMMKRAVFARELGVPIIMHDYLTGGFTANTSLAHYCRDNGLLLHIHRAMHAVIDRQKNHGIHFRVLAKALRMSGGDHIHSGTVVGKLEGEREITLGFVDLLRDDFIEKDRSRGIYFTXDWVSLPGVIPVASGGIHVWHMPALTEIFGDDSVLQFGGGTLGHPWGNXPGAVANRVALEACVQARNEGRDLAAEGNTIIREASKWSPELAAACEVWKEIKFEFKPVDTLDV</sequence>